<gene>
    <name evidence="1" type="primary">hemF</name>
    <name type="ordered locus">YPN_1353</name>
    <name type="ORF">YP516_1491</name>
</gene>
<protein>
    <recommendedName>
        <fullName evidence="1">Oxygen-dependent coproporphyrinogen-III oxidase</fullName>
        <shortName evidence="1">CPO</shortName>
        <shortName evidence="1">Coprogen oxidase</shortName>
        <shortName evidence="1">Coproporphyrinogenase</shortName>
        <ecNumber evidence="1">1.3.3.3</ecNumber>
    </recommendedName>
</protein>
<proteinExistence type="inferred from homology"/>
<feature type="chain" id="PRO_1000019518" description="Oxygen-dependent coproporphyrinogen-III oxidase">
    <location>
        <begin position="1"/>
        <end position="309"/>
    </location>
</feature>
<feature type="region of interest" description="Important for dimerization" evidence="1">
    <location>
        <begin position="242"/>
        <end position="277"/>
    </location>
</feature>
<feature type="active site" description="Proton donor" evidence="1">
    <location>
        <position position="108"/>
    </location>
</feature>
<feature type="binding site" evidence="1">
    <location>
        <position position="94"/>
    </location>
    <ligand>
        <name>substrate</name>
    </ligand>
</feature>
<feature type="binding site" evidence="1">
    <location>
        <position position="98"/>
    </location>
    <ligand>
        <name>a divalent metal cation</name>
        <dbReference type="ChEBI" id="CHEBI:60240"/>
    </ligand>
</feature>
<feature type="binding site" evidence="1">
    <location>
        <position position="108"/>
    </location>
    <ligand>
        <name>a divalent metal cation</name>
        <dbReference type="ChEBI" id="CHEBI:60240"/>
    </ligand>
</feature>
<feature type="binding site" evidence="1">
    <location>
        <begin position="110"/>
        <end position="112"/>
    </location>
    <ligand>
        <name>substrate</name>
    </ligand>
</feature>
<feature type="binding site" evidence="1">
    <location>
        <position position="147"/>
    </location>
    <ligand>
        <name>a divalent metal cation</name>
        <dbReference type="ChEBI" id="CHEBI:60240"/>
    </ligand>
</feature>
<feature type="binding site" evidence="1">
    <location>
        <position position="177"/>
    </location>
    <ligand>
        <name>a divalent metal cation</name>
        <dbReference type="ChEBI" id="CHEBI:60240"/>
    </ligand>
</feature>
<feature type="binding site" evidence="1">
    <location>
        <begin position="260"/>
        <end position="262"/>
    </location>
    <ligand>
        <name>substrate</name>
    </ligand>
</feature>
<feature type="site" description="Important for dimerization" evidence="1">
    <location>
        <position position="177"/>
    </location>
</feature>
<sequence length="309" mass="35005">MNSPDIALIKTYLLTLQDNICAALAQADGHAEFTEECWVREEGGGGRSRVLVNGAVFEQAGVNFSHVSGAMLPASATAHRPELAGRSFQALGVSLVIHPLNPYLPTSHANVRFFIAEKPGEDAVWWFGGGFDLTPYYGFEEDAIHWHQVAHSLCQPFGEQIYPRYKKWCDDYFYIKHRQEARGIGGLFFDDLNSPDFMTCFNFTQAVGDGFLAAYMPIVARRKALGWGDRERQFQLYRRGRYVEFNLVWDRGTLFGLQTGGRTESILMSLPPLVRWEYNYQPEADSAEAALYRDFLPVKDWLAIKGETH</sequence>
<reference key="1">
    <citation type="journal article" date="2006" name="J. Bacteriol.">
        <title>Complete genome sequence of Yersinia pestis strains Antiqua and Nepal516: evidence of gene reduction in an emerging pathogen.</title>
        <authorList>
            <person name="Chain P.S.G."/>
            <person name="Hu P."/>
            <person name="Malfatti S.A."/>
            <person name="Radnedge L."/>
            <person name="Larimer F."/>
            <person name="Vergez L.M."/>
            <person name="Worsham P."/>
            <person name="Chu M.C."/>
            <person name="Andersen G.L."/>
        </authorList>
    </citation>
    <scope>NUCLEOTIDE SEQUENCE [LARGE SCALE GENOMIC DNA]</scope>
    <source>
        <strain>Nepal516</strain>
    </source>
</reference>
<reference key="2">
    <citation type="submission" date="2009-04" db="EMBL/GenBank/DDBJ databases">
        <title>Yersinia pestis Nepal516A whole genome shotgun sequencing project.</title>
        <authorList>
            <person name="Plunkett G. III"/>
            <person name="Anderson B.D."/>
            <person name="Baumler D.J."/>
            <person name="Burland V."/>
            <person name="Cabot E.L."/>
            <person name="Glasner J.D."/>
            <person name="Mau B."/>
            <person name="Neeno-Eckwall E."/>
            <person name="Perna N.T."/>
            <person name="Munk A.C."/>
            <person name="Tapia R."/>
            <person name="Green L.D."/>
            <person name="Rogers Y.C."/>
            <person name="Detter J.C."/>
            <person name="Bruce D.C."/>
            <person name="Brettin T.S."/>
        </authorList>
    </citation>
    <scope>NUCLEOTIDE SEQUENCE [LARGE SCALE GENOMIC DNA]</scope>
    <source>
        <strain>Nepal516</strain>
    </source>
</reference>
<name>HEM6_YERPN</name>
<accession>Q1CJZ7</accession>
<accession>C4GRW3</accession>
<dbReference type="EC" id="1.3.3.3" evidence="1"/>
<dbReference type="EMBL" id="CP000305">
    <property type="protein sequence ID" value="ABG17683.1"/>
    <property type="molecule type" value="Genomic_DNA"/>
</dbReference>
<dbReference type="EMBL" id="ACNQ01000008">
    <property type="protein sequence ID" value="EEO77804.1"/>
    <property type="molecule type" value="Genomic_DNA"/>
</dbReference>
<dbReference type="RefSeq" id="WP_002208526.1">
    <property type="nucleotide sequence ID" value="NZ_ACNQ01000008.1"/>
</dbReference>
<dbReference type="SMR" id="Q1CJZ7"/>
<dbReference type="GeneID" id="57975670"/>
<dbReference type="KEGG" id="ypn:YPN_1353"/>
<dbReference type="HOGENOM" id="CLU_026169_0_1_6"/>
<dbReference type="UniPathway" id="UPA00251">
    <property type="reaction ID" value="UER00322"/>
</dbReference>
<dbReference type="Proteomes" id="UP000008936">
    <property type="component" value="Chromosome"/>
</dbReference>
<dbReference type="GO" id="GO:0005737">
    <property type="term" value="C:cytoplasm"/>
    <property type="evidence" value="ECO:0007669"/>
    <property type="project" value="UniProtKB-SubCell"/>
</dbReference>
<dbReference type="GO" id="GO:0004109">
    <property type="term" value="F:coproporphyrinogen oxidase activity"/>
    <property type="evidence" value="ECO:0007669"/>
    <property type="project" value="UniProtKB-UniRule"/>
</dbReference>
<dbReference type="GO" id="GO:0046872">
    <property type="term" value="F:metal ion binding"/>
    <property type="evidence" value="ECO:0007669"/>
    <property type="project" value="UniProtKB-KW"/>
</dbReference>
<dbReference type="GO" id="GO:0042803">
    <property type="term" value="F:protein homodimerization activity"/>
    <property type="evidence" value="ECO:0000250"/>
    <property type="project" value="UniProtKB"/>
</dbReference>
<dbReference type="GO" id="GO:0006782">
    <property type="term" value="P:protoporphyrinogen IX biosynthetic process"/>
    <property type="evidence" value="ECO:0007669"/>
    <property type="project" value="UniProtKB-UniRule"/>
</dbReference>
<dbReference type="FunFam" id="3.40.1500.10:FF:000001">
    <property type="entry name" value="Oxygen-dependent coproporphyrinogen-III oxidase"/>
    <property type="match status" value="1"/>
</dbReference>
<dbReference type="Gene3D" id="3.40.1500.10">
    <property type="entry name" value="Coproporphyrinogen III oxidase, aerobic"/>
    <property type="match status" value="1"/>
</dbReference>
<dbReference type="HAMAP" id="MF_00333">
    <property type="entry name" value="Coprogen_oxidas"/>
    <property type="match status" value="1"/>
</dbReference>
<dbReference type="InterPro" id="IPR001260">
    <property type="entry name" value="Coprogen_oxidase_aer"/>
</dbReference>
<dbReference type="InterPro" id="IPR036406">
    <property type="entry name" value="Coprogen_oxidase_aer_sf"/>
</dbReference>
<dbReference type="InterPro" id="IPR018375">
    <property type="entry name" value="Coprogen_oxidase_CS"/>
</dbReference>
<dbReference type="NCBIfam" id="NF003727">
    <property type="entry name" value="PRK05330.1"/>
    <property type="match status" value="1"/>
</dbReference>
<dbReference type="PANTHER" id="PTHR10755">
    <property type="entry name" value="COPROPORPHYRINOGEN III OXIDASE, MITOCHONDRIAL"/>
    <property type="match status" value="1"/>
</dbReference>
<dbReference type="PANTHER" id="PTHR10755:SF0">
    <property type="entry name" value="OXYGEN-DEPENDENT COPROPORPHYRINOGEN-III OXIDASE, MITOCHONDRIAL"/>
    <property type="match status" value="1"/>
</dbReference>
<dbReference type="Pfam" id="PF01218">
    <property type="entry name" value="Coprogen_oxidas"/>
    <property type="match status" value="1"/>
</dbReference>
<dbReference type="PIRSF" id="PIRSF000166">
    <property type="entry name" value="Coproporphyri_ox"/>
    <property type="match status" value="1"/>
</dbReference>
<dbReference type="PRINTS" id="PR00073">
    <property type="entry name" value="COPRGNOXDASE"/>
</dbReference>
<dbReference type="SUPFAM" id="SSF102886">
    <property type="entry name" value="Coproporphyrinogen III oxidase"/>
    <property type="match status" value="1"/>
</dbReference>
<dbReference type="PROSITE" id="PS01021">
    <property type="entry name" value="COPROGEN_OXIDASE"/>
    <property type="match status" value="1"/>
</dbReference>
<comment type="function">
    <text evidence="1">Involved in the heme biosynthesis. Catalyzes the aerobic oxidative decarboxylation of propionate groups of rings A and B of coproporphyrinogen-III to yield the vinyl groups in protoporphyrinogen-IX.</text>
</comment>
<comment type="catalytic activity">
    <reaction evidence="1">
        <text>coproporphyrinogen III + O2 + 2 H(+) = protoporphyrinogen IX + 2 CO2 + 2 H2O</text>
        <dbReference type="Rhea" id="RHEA:18257"/>
        <dbReference type="ChEBI" id="CHEBI:15377"/>
        <dbReference type="ChEBI" id="CHEBI:15378"/>
        <dbReference type="ChEBI" id="CHEBI:15379"/>
        <dbReference type="ChEBI" id="CHEBI:16526"/>
        <dbReference type="ChEBI" id="CHEBI:57307"/>
        <dbReference type="ChEBI" id="CHEBI:57309"/>
        <dbReference type="EC" id="1.3.3.3"/>
    </reaction>
</comment>
<comment type="cofactor">
    <cofactor evidence="1">
        <name>a divalent metal cation</name>
        <dbReference type="ChEBI" id="CHEBI:60240"/>
    </cofactor>
</comment>
<comment type="pathway">
    <text evidence="1">Porphyrin-containing compound metabolism; protoporphyrin-IX biosynthesis; protoporphyrinogen-IX from coproporphyrinogen-III (O2 route): step 1/1.</text>
</comment>
<comment type="subunit">
    <text evidence="1">Homodimer.</text>
</comment>
<comment type="subcellular location">
    <subcellularLocation>
        <location evidence="1">Cytoplasm</location>
    </subcellularLocation>
</comment>
<comment type="similarity">
    <text evidence="1">Belongs to the aerobic coproporphyrinogen-III oxidase family.</text>
</comment>
<keyword id="KW-0963">Cytoplasm</keyword>
<keyword id="KW-0350">Heme biosynthesis</keyword>
<keyword id="KW-0479">Metal-binding</keyword>
<keyword id="KW-0560">Oxidoreductase</keyword>
<keyword id="KW-0627">Porphyrin biosynthesis</keyword>
<organism>
    <name type="scientific">Yersinia pestis bv. Antiqua (strain Nepal516)</name>
    <dbReference type="NCBI Taxonomy" id="377628"/>
    <lineage>
        <taxon>Bacteria</taxon>
        <taxon>Pseudomonadati</taxon>
        <taxon>Pseudomonadota</taxon>
        <taxon>Gammaproteobacteria</taxon>
        <taxon>Enterobacterales</taxon>
        <taxon>Yersiniaceae</taxon>
        <taxon>Yersinia</taxon>
    </lineage>
</organism>
<evidence type="ECO:0000255" key="1">
    <source>
        <dbReference type="HAMAP-Rule" id="MF_00333"/>
    </source>
</evidence>